<feature type="chain" id="PRO_5000247198" description="Putative antiporter subunit mnhG2">
    <location>
        <begin position="1"/>
        <end position="145"/>
    </location>
</feature>
<feature type="transmembrane region" description="Helical" evidence="2">
    <location>
        <begin position="11"/>
        <end position="31"/>
    </location>
</feature>
<feature type="transmembrane region" description="Helical" evidence="2">
    <location>
        <begin position="51"/>
        <end position="71"/>
    </location>
</feature>
<feature type="transmembrane region" description="Helical" evidence="2">
    <location>
        <begin position="72"/>
        <end position="92"/>
    </location>
</feature>
<proteinExistence type="inferred from homology"/>
<sequence length="145" mass="16302">MEITKEIFSLIAAVMLLLGSFIALISAIGIVKFQDVFLRSHAATKSSTLSVLLTLIGVLIYFIVNTGFFSVRLLLSLVFINLTSPVGMHLVARAAYRNGAYMYRKNDAHTHASILLSSNEQNSTEALQLRAKKREEHRKKWYQND</sequence>
<dbReference type="EMBL" id="CP000703">
    <property type="protein sequence ID" value="ABQ48454.1"/>
    <property type="molecule type" value="Genomic_DNA"/>
</dbReference>
<dbReference type="RefSeq" id="WP_000406612.1">
    <property type="nucleotide sequence ID" value="NC_009487.1"/>
</dbReference>
<dbReference type="SMR" id="A5IQI1"/>
<dbReference type="KEGG" id="saj:SaurJH9_0651"/>
<dbReference type="HOGENOM" id="CLU_121334_0_3_9"/>
<dbReference type="GO" id="GO:0005886">
    <property type="term" value="C:plasma membrane"/>
    <property type="evidence" value="ECO:0007669"/>
    <property type="project" value="UniProtKB-SubCell"/>
</dbReference>
<dbReference type="GO" id="GO:0015385">
    <property type="term" value="F:sodium:proton antiporter activity"/>
    <property type="evidence" value="ECO:0007669"/>
    <property type="project" value="TreeGrafter"/>
</dbReference>
<dbReference type="InterPro" id="IPR005133">
    <property type="entry name" value="PhaG_MnhG_YufB"/>
</dbReference>
<dbReference type="NCBIfam" id="TIGR01300">
    <property type="entry name" value="CPA3_mnhG_phaG"/>
    <property type="match status" value="1"/>
</dbReference>
<dbReference type="NCBIfam" id="NF009236">
    <property type="entry name" value="PRK12586.1"/>
    <property type="match status" value="1"/>
</dbReference>
<dbReference type="NCBIfam" id="NF009314">
    <property type="entry name" value="PRK12674.1-2"/>
    <property type="match status" value="1"/>
</dbReference>
<dbReference type="PANTHER" id="PTHR34703">
    <property type="entry name" value="ANTIPORTER SUBUNIT MNHG2-RELATED"/>
    <property type="match status" value="1"/>
</dbReference>
<dbReference type="PANTHER" id="PTHR34703:SF1">
    <property type="entry name" value="ANTIPORTER SUBUNIT MNHG2-RELATED"/>
    <property type="match status" value="1"/>
</dbReference>
<dbReference type="Pfam" id="PF03334">
    <property type="entry name" value="PhaG_MnhG_YufB"/>
    <property type="match status" value="1"/>
</dbReference>
<protein>
    <recommendedName>
        <fullName>Putative antiporter subunit mnhG2</fullName>
    </recommendedName>
    <alternativeName>
        <fullName>Mrp complex subunit G2</fullName>
    </alternativeName>
    <alternativeName>
        <fullName>Putative NADH-ubiquinone oxidoreductase subunit mnhF2</fullName>
    </alternativeName>
</protein>
<evidence type="ECO:0000250" key="1"/>
<evidence type="ECO:0000255" key="2"/>
<evidence type="ECO:0000305" key="3"/>
<gene>
    <name type="primary">mnhG2</name>
    <name type="synonym">mrpG2</name>
    <name type="ordered locus">SaurJH9_0651</name>
</gene>
<comment type="subunit">
    <text evidence="1">May form a heterooligomeric complex that consists of seven subunits: mnhA2, mnhB2, mnhC2, mnhD2, mnhE2, mnhF2 and mnhG2.</text>
</comment>
<comment type="subcellular location">
    <subcellularLocation>
        <location evidence="3">Cell membrane</location>
        <topology evidence="3">Multi-pass membrane protein</topology>
    </subcellularLocation>
</comment>
<comment type="similarity">
    <text evidence="3">Belongs to the CPA3 antiporters (TC 2.A.63) subunit G family.</text>
</comment>
<accession>A5IQI1</accession>
<reference key="1">
    <citation type="submission" date="2007-05" db="EMBL/GenBank/DDBJ databases">
        <title>Complete sequence of chromosome of Staphylococcus aureus subsp. aureus JH9.</title>
        <authorList>
            <consortium name="US DOE Joint Genome Institute"/>
            <person name="Copeland A."/>
            <person name="Lucas S."/>
            <person name="Lapidus A."/>
            <person name="Barry K."/>
            <person name="Detter J.C."/>
            <person name="Glavina del Rio T."/>
            <person name="Hammon N."/>
            <person name="Israni S."/>
            <person name="Pitluck S."/>
            <person name="Chain P."/>
            <person name="Malfatti S."/>
            <person name="Shin M."/>
            <person name="Vergez L."/>
            <person name="Schmutz J."/>
            <person name="Larimer F."/>
            <person name="Land M."/>
            <person name="Hauser L."/>
            <person name="Kyrpides N."/>
            <person name="Kim E."/>
            <person name="Tomasz A."/>
            <person name="Richardson P."/>
        </authorList>
    </citation>
    <scope>NUCLEOTIDE SEQUENCE [LARGE SCALE GENOMIC DNA]</scope>
    <source>
        <strain>JH9</strain>
    </source>
</reference>
<organism>
    <name type="scientific">Staphylococcus aureus (strain JH9)</name>
    <dbReference type="NCBI Taxonomy" id="359786"/>
    <lineage>
        <taxon>Bacteria</taxon>
        <taxon>Bacillati</taxon>
        <taxon>Bacillota</taxon>
        <taxon>Bacilli</taxon>
        <taxon>Bacillales</taxon>
        <taxon>Staphylococcaceae</taxon>
        <taxon>Staphylococcus</taxon>
    </lineage>
</organism>
<name>MNHG2_STAA9</name>
<keyword id="KW-0050">Antiport</keyword>
<keyword id="KW-1003">Cell membrane</keyword>
<keyword id="KW-0406">Ion transport</keyword>
<keyword id="KW-0472">Membrane</keyword>
<keyword id="KW-0812">Transmembrane</keyword>
<keyword id="KW-1133">Transmembrane helix</keyword>
<keyword id="KW-0813">Transport</keyword>